<geneLocation type="mitochondrion"/>
<dbReference type="EMBL" id="U12386">
    <property type="protein sequence ID" value="AAD11842.1"/>
    <property type="molecule type" value="Genomic_DNA"/>
</dbReference>
<dbReference type="PIR" id="S53807">
    <property type="entry name" value="S53807"/>
</dbReference>
<dbReference type="RefSeq" id="NP_042549.1">
    <property type="nucleotide sequence ID" value="NC_001637.1"/>
</dbReference>
<dbReference type="SMR" id="P46768"/>
<dbReference type="GeneID" id="1734046"/>
<dbReference type="GO" id="GO:0005762">
    <property type="term" value="C:mitochondrial large ribosomal subunit"/>
    <property type="evidence" value="ECO:0007669"/>
    <property type="project" value="TreeGrafter"/>
</dbReference>
<dbReference type="GO" id="GO:0019843">
    <property type="term" value="F:rRNA binding"/>
    <property type="evidence" value="ECO:0007669"/>
    <property type="project" value="InterPro"/>
</dbReference>
<dbReference type="GO" id="GO:0003735">
    <property type="term" value="F:structural constituent of ribosome"/>
    <property type="evidence" value="ECO:0007669"/>
    <property type="project" value="InterPro"/>
</dbReference>
<dbReference type="GO" id="GO:0032543">
    <property type="term" value="P:mitochondrial translation"/>
    <property type="evidence" value="ECO:0007669"/>
    <property type="project" value="TreeGrafter"/>
</dbReference>
<dbReference type="CDD" id="cd01433">
    <property type="entry name" value="Ribosomal_L16_L10e"/>
    <property type="match status" value="1"/>
</dbReference>
<dbReference type="Gene3D" id="3.90.1170.10">
    <property type="entry name" value="Ribosomal protein L10e/L16"/>
    <property type="match status" value="1"/>
</dbReference>
<dbReference type="InterPro" id="IPR047873">
    <property type="entry name" value="Ribosomal_uL16"/>
</dbReference>
<dbReference type="InterPro" id="IPR000114">
    <property type="entry name" value="Ribosomal_uL16_bact-type"/>
</dbReference>
<dbReference type="InterPro" id="IPR020798">
    <property type="entry name" value="Ribosomal_uL16_CS"/>
</dbReference>
<dbReference type="InterPro" id="IPR016180">
    <property type="entry name" value="Ribosomal_uL16_dom"/>
</dbReference>
<dbReference type="InterPro" id="IPR036920">
    <property type="entry name" value="Ribosomal_uL16_sf"/>
</dbReference>
<dbReference type="NCBIfam" id="TIGR01164">
    <property type="entry name" value="rplP_bact"/>
    <property type="match status" value="1"/>
</dbReference>
<dbReference type="PANTHER" id="PTHR12220">
    <property type="entry name" value="50S/60S RIBOSOMAL PROTEIN L16"/>
    <property type="match status" value="1"/>
</dbReference>
<dbReference type="PANTHER" id="PTHR12220:SF13">
    <property type="entry name" value="LARGE RIBOSOMAL SUBUNIT PROTEIN UL16M"/>
    <property type="match status" value="1"/>
</dbReference>
<dbReference type="Pfam" id="PF00252">
    <property type="entry name" value="Ribosomal_L16"/>
    <property type="match status" value="1"/>
</dbReference>
<dbReference type="PRINTS" id="PR00060">
    <property type="entry name" value="RIBOSOMALL16"/>
</dbReference>
<dbReference type="SUPFAM" id="SSF54686">
    <property type="entry name" value="Ribosomal protein L16p/L10e"/>
    <property type="match status" value="1"/>
</dbReference>
<dbReference type="PROSITE" id="PS00701">
    <property type="entry name" value="RIBOSOMAL_L16_2"/>
    <property type="match status" value="1"/>
</dbReference>
<proteinExistence type="inferred from homology"/>
<organism>
    <name type="scientific">Acanthamoeba castellanii</name>
    <name type="common">Amoeba</name>
    <dbReference type="NCBI Taxonomy" id="5755"/>
    <lineage>
        <taxon>Eukaryota</taxon>
        <taxon>Amoebozoa</taxon>
        <taxon>Discosea</taxon>
        <taxon>Longamoebia</taxon>
        <taxon>Centramoebida</taxon>
        <taxon>Acanthamoebidae</taxon>
        <taxon>Acanthamoeba</taxon>
    </lineage>
</organism>
<gene>
    <name type="primary">RPL16</name>
</gene>
<name>RM16_ACACA</name>
<keyword id="KW-0496">Mitochondrion</keyword>
<keyword id="KW-0687">Ribonucleoprotein</keyword>
<keyword id="KW-0689">Ribosomal protein</keyword>
<comment type="subcellular location">
    <subcellularLocation>
        <location>Mitochondrion</location>
    </subcellularLocation>
</comment>
<comment type="similarity">
    <text evidence="1">Belongs to the universal ribosomal protein uL16 family.</text>
</comment>
<evidence type="ECO:0000305" key="1"/>
<protein>
    <recommendedName>
        <fullName evidence="1">Large ribosomal subunit protein uL16m</fullName>
    </recommendedName>
    <alternativeName>
        <fullName>60S ribosomal protein L16, mitochondrial</fullName>
    </alternativeName>
</protein>
<reference key="1">
    <citation type="journal article" date="1995" name="J. Mol. Biol.">
        <title>The mitochondrial DNA of the amoeboid protozoon, Acanthamoeba castellanii: complete sequence, gene content and genome organization.</title>
        <authorList>
            <person name="Burger G."/>
            <person name="Plante I."/>
            <person name="Lonergan K.M."/>
            <person name="Gray M.W."/>
        </authorList>
    </citation>
    <scope>NUCLEOTIDE SEQUENCE [GENOMIC DNA]</scope>
    <source>
        <strain>ATCC 30010 / Neff</strain>
    </source>
</reference>
<accession>P46768</accession>
<feature type="chain" id="PRO_0000062329" description="Large ribosomal subunit protein uL16m">
    <location>
        <begin position="1"/>
        <end position="141"/>
    </location>
</feature>
<sequence length="141" mass="16393">MRFKKYFKIKYKNNNVYEHDLIHFGDFGLKSLGNCNLTSEQLTASLKAIKRVIKKKNFLIIKALPFWMLTRKPRDVRMGRGKGSPAVKVYPLKAGKIIFEFKNVNETLLLRALKSSSLRLPVPTKVVKKYDKRTDCIKSSW</sequence>